<protein>
    <recommendedName>
        <fullName>Baseplate hub protein gp44</fullName>
    </recommendedName>
    <alternativeName>
        <fullName>43 kDa tail protein</fullName>
    </alternativeName>
    <alternativeName>
        <fullName>Gene product 44</fullName>
        <shortName>gp44</shortName>
    </alternativeName>
    <alternativeName>
        <fullName>Gene product P</fullName>
        <shortName>gpP</shortName>
    </alternativeName>
</protein>
<accession>P08558</accession>
<organismHost>
    <name type="scientific">Enterobacteriaceae</name>
    <dbReference type="NCBI Taxonomy" id="543"/>
</organismHost>
<proteinExistence type="evidence at protein level"/>
<evidence type="ECO:0000255" key="1"/>
<evidence type="ECO:0000256" key="2">
    <source>
        <dbReference type="SAM" id="MobiDB-lite"/>
    </source>
</evidence>
<evidence type="ECO:0000269" key="3">
    <source>
    </source>
</evidence>
<evidence type="ECO:0000269" key="4">
    <source>
    </source>
</evidence>
<evidence type="ECO:0000269" key="5">
    <source>
    </source>
</evidence>
<evidence type="ECO:0000269" key="6">
    <source>
    </source>
</evidence>
<evidence type="ECO:0000269" key="7">
    <source>
    </source>
</evidence>
<evidence type="ECO:0000305" key="8"/>
<evidence type="ECO:0000305" key="9">
    <source>
    </source>
</evidence>
<evidence type="ECO:0007829" key="10">
    <source>
        <dbReference type="PDB" id="1WRU"/>
    </source>
</evidence>
<dbReference type="EMBL" id="X06796">
    <property type="protein sequence ID" value="CAA29956.1"/>
    <property type="molecule type" value="Genomic_DNA"/>
</dbReference>
<dbReference type="EMBL" id="AF083977">
    <property type="protein sequence ID" value="AAF01122.1"/>
    <property type="molecule type" value="Genomic_DNA"/>
</dbReference>
<dbReference type="PIR" id="S01891">
    <property type="entry name" value="ZPBPMU"/>
</dbReference>
<dbReference type="RefSeq" id="NP_050648.1">
    <property type="nucleotide sequence ID" value="NC_000929.1"/>
</dbReference>
<dbReference type="PDB" id="1WRU">
    <property type="method" value="X-ray"/>
    <property type="resolution" value="2.10 A"/>
    <property type="chains" value="A=1-379"/>
</dbReference>
<dbReference type="PDB" id="9KI1">
    <property type="method" value="EM"/>
    <property type="resolution" value="3.30 A"/>
    <property type="chains" value="G/N/U=1-379"/>
</dbReference>
<dbReference type="PDBsum" id="1WRU"/>
<dbReference type="PDBsum" id="9KI1"/>
<dbReference type="EMDB" id="EMD-62362"/>
<dbReference type="SMR" id="P08558"/>
<dbReference type="GeneID" id="2636285"/>
<dbReference type="KEGG" id="vg:2636285"/>
<dbReference type="EvolutionaryTrace" id="P08558"/>
<dbReference type="Proteomes" id="UP000002611">
    <property type="component" value="Genome"/>
</dbReference>
<dbReference type="GO" id="GO:0030430">
    <property type="term" value="C:host cell cytoplasm"/>
    <property type="evidence" value="ECO:0007669"/>
    <property type="project" value="UniProtKB-SubCell"/>
</dbReference>
<dbReference type="GO" id="GO:0098025">
    <property type="term" value="C:virus tail, baseplate"/>
    <property type="evidence" value="ECO:0007669"/>
    <property type="project" value="UniProtKB-KW"/>
</dbReference>
<dbReference type="GO" id="GO:0099000">
    <property type="term" value="P:symbiont genome ejection through host cell envelope, contractile tail mechanism"/>
    <property type="evidence" value="ECO:0007669"/>
    <property type="project" value="UniProtKB-KW"/>
</dbReference>
<dbReference type="GO" id="GO:0098003">
    <property type="term" value="P:viral tail assembly"/>
    <property type="evidence" value="ECO:0007669"/>
    <property type="project" value="UniProtKB-KW"/>
</dbReference>
<dbReference type="Gene3D" id="2.30.300.10">
    <property type="entry name" value="Baseplate protein-like domain - beta roll fold"/>
    <property type="match status" value="1"/>
</dbReference>
<dbReference type="Gene3D" id="3.55.50.10">
    <property type="entry name" value="Baseplate protein-like domains"/>
    <property type="match status" value="1"/>
</dbReference>
<dbReference type="Gene3D" id="3.30.1920.10">
    <property type="entry name" value="Baseplate protein-like domains - 2 layer sandwich fold"/>
    <property type="match status" value="1"/>
</dbReference>
<dbReference type="InterPro" id="IPR023399">
    <property type="entry name" value="Baseplate-like_2-layer_sand"/>
</dbReference>
<dbReference type="InterPro" id="IPR026276">
    <property type="entry name" value="Baseplate_GpP"/>
</dbReference>
<dbReference type="InterPro" id="IPR053981">
    <property type="entry name" value="Gp44/GpP-like_2nd"/>
</dbReference>
<dbReference type="InterPro" id="IPR053982">
    <property type="entry name" value="Gp44/GpP-like_C"/>
</dbReference>
<dbReference type="InterPro" id="IPR049354">
    <property type="entry name" value="GpP-like_N"/>
</dbReference>
<dbReference type="Pfam" id="PF22255">
    <property type="entry name" value="Gp44-like_2nd"/>
    <property type="match status" value="1"/>
</dbReference>
<dbReference type="Pfam" id="PF21683">
    <property type="entry name" value="GpP-like_1st"/>
    <property type="match status" value="1"/>
</dbReference>
<dbReference type="Pfam" id="PF21929">
    <property type="entry name" value="GpP_4th"/>
    <property type="match status" value="1"/>
</dbReference>
<dbReference type="PIRSF" id="PIRSF004440">
    <property type="entry name" value="GpP"/>
    <property type="match status" value="1"/>
</dbReference>
<dbReference type="SUPFAM" id="SSF69279">
    <property type="entry name" value="Phage tail proteins"/>
    <property type="match status" value="2"/>
</dbReference>
<gene>
    <name type="primary">P</name>
    <name type="ordered locus">Mup44</name>
</gene>
<sequence length="379" mass="41785">MSNTVTLRADGRLFTGWTSVSVTRSIESVAGYFELGVNVPPGTDLSGLAPGKKFTLEIGGQIVCTGYIDSRRRQMTADSMKITVAGRDKTADLIDCAAVYSGGQWKNRTLEQIARDLCAPYGVTVRWELSDKESSAAFPGFTLDHSETVYEALVRASRARGVLMTSNAAGELVFSRAASTATDELVLGENLLTLDFEEDFRDRFSEYTVKGYARANGAEGDDIDAKSIVSRKGTATDSDVTRYRPMIIIADSKITAKDAQARALREQRRRLAKSITFEAEIDGWTRKDGQLWMPNLLVTIDASKYAIKTTELLVSKVTLILNDQDGLKTRVSLAPREGFLVPVESDRKNRKGGDSNGGIDALVEDYYRRHPEKTPPWKE</sequence>
<organism>
    <name type="scientific">Escherichia phage Mu</name>
    <name type="common">Bacteriophage Mu</name>
    <dbReference type="NCBI Taxonomy" id="2681603"/>
    <lineage>
        <taxon>Viruses</taxon>
        <taxon>Duplodnaviria</taxon>
        <taxon>Heunggongvirae</taxon>
        <taxon>Uroviricota</taxon>
        <taxon>Caudoviricetes</taxon>
        <taxon>Muvirus</taxon>
        <taxon>Muvirus mu</taxon>
    </lineage>
</organism>
<reference key="1">
    <citation type="journal article" date="1988" name="Nucleic Acids Res.">
        <title>Sequence of bacteriophage Mu N and P genes.</title>
        <authorList>
            <person name="Chaconas G."/>
            <person name="Gloor G."/>
        </authorList>
    </citation>
    <scope>NUCLEOTIDE SEQUENCE [GENOMIC DNA]</scope>
    <source>
        <strain>MUCTS62PAP1</strain>
    </source>
</reference>
<reference key="2">
    <citation type="journal article" date="2002" name="J. Mol. Biol.">
        <title>Bacteriophage Mu genome sequence: analysis and comparison with Mu-like prophages in Haemophilus, Neisseria and Deinococcus.</title>
        <authorList>
            <person name="Morgan G.J."/>
            <person name="Hatfull G.F."/>
            <person name="Casjens S."/>
            <person name="Hendrix R.W."/>
        </authorList>
    </citation>
    <scope>NUCLEOTIDE SEQUENCE [LARGE SCALE GENOMIC DNA]</scope>
</reference>
<reference key="3">
    <citation type="journal article" date="1985" name="Virology">
        <title>Morphogenetic structures present in lysates of amber mutants of bacteriophage Mu.</title>
        <authorList>
            <person name="Grundy F.J."/>
            <person name="Howe M.M."/>
        </authorList>
    </citation>
    <scope>DISRUPTION PHENOTYPE</scope>
</reference>
<reference key="4">
    <citation type="journal article" date="1993" name="Genetics">
        <title>Mutational analysis of a C-dependent late promoter of bacteriophage Mu.</title>
        <authorList>
            <person name="Chiang L.W."/>
            <person name="Howe M.M."/>
        </authorList>
    </citation>
    <scope>INDUCTION</scope>
</reference>
<reference key="5">
    <citation type="journal article" date="2005" name="J. Biochem.">
        <title>Expression and characterization of a baseplate protein for bacteriophage Mu, gp44.</title>
        <authorList>
            <person name="Kitazawa D."/>
            <person name="Takeda S."/>
            <person name="Kageyama Y."/>
            <person name="Tomihara M."/>
            <person name="Fukada H."/>
        </authorList>
    </citation>
    <scope>CHARACTERIZATION</scope>
    <scope>SUBUNIT</scope>
    <scope>CLEAVAGE OF C-TERMINUS</scope>
</reference>
<reference key="6">
    <citation type="journal article" date="2012" name="Adv. Exp. Med. Biol.">
        <title>Contractile tail machines of bacteriophages.</title>
        <authorList>
            <person name="Leiman P.G."/>
            <person name="Shneider M.M."/>
        </authorList>
    </citation>
    <scope>REVIEW</scope>
</reference>
<reference key="7">
    <citation type="journal article" date="2016" name="Proc. Natl. Acad. Sci. U.S.A.">
        <title>Baseplate assembly of phage Mu: Defining the conserved core components of contractile-tailed phages and related bacterial systems.</title>
        <authorList>
            <person name="Buettner C.R."/>
            <person name="Wu Y."/>
            <person name="Maxwell K.L."/>
            <person name="Davidson A.R."/>
        </authorList>
    </citation>
    <scope>SUBUNIT</scope>
    <scope>SUBCELLULAR LOCATION</scope>
</reference>
<reference key="8">
    <citation type="journal article" date="2005" name="J. Mol. Biol.">
        <title>Structure of the central hub of bacteriophage Mu baseplate determined by X-ray crystallography of gp44.</title>
        <authorList>
            <person name="Kondou Y."/>
            <person name="Kitazawa D."/>
            <person name="Takeda S."/>
            <person name="Tsuchiya Y."/>
            <person name="Yamashita E."/>
            <person name="Mizuguchi M."/>
            <person name="Kawano K."/>
            <person name="Tsukihara T."/>
        </authorList>
    </citation>
    <scope>X-RAY CRYSTALLOGRAPHY (2.1 ANGSTROMS)</scope>
    <scope>SUBCELLULAR LOCATION</scope>
    <scope>SUBUNIT</scope>
</reference>
<comment type="function">
    <text evidence="8">Forms the central cylindrical hub of the baseplate and plays an important role in baseplate and tail assembly (Probable). Core component of the initiator complex that triggers the tail tube polymerization during tail assembly (Probable). Forms a conduit that probably functions as an extension of the tail tube allowing viral DNA release during ejection. Might facilitate the interaction of the virus with the host cell surface through electrostatic interactions during virus entry into host cell.</text>
</comment>
<comment type="subunit">
    <text evidence="3 4 5">Heterotrimer of one uncleaved (42 kDa) and two cleaved (40 kDa) forms. Forms a hub-like structure with an inner diameter of 25 Angstroms through which DNA can presumably pass during infection. Part of a complex composed of three DNA circularization protein N, three baseplate hub protein gp44 and three sub-complex wedge (made of two copies of each baseplate protein gp46, gp47 and gp48) that forms the baseplate (PubMed:27555589).</text>
</comment>
<comment type="subcellular location">
    <subcellularLocation>
        <location evidence="4 5">Virion</location>
    </subcellularLocation>
    <subcellularLocation>
        <location evidence="9">Host cytoplasm</location>
    </subcellularLocation>
    <text evidence="5">Baseplate protein.</text>
</comment>
<comment type="induction">
    <text evidence="7">Expressed in the late phase of the viral replicative cycle. Expression of late genes is activated by the viral late transcription activator C.</text>
</comment>
<comment type="domain">
    <text evidence="8">C-terminal region forms a flexible domain.</text>
</comment>
<comment type="PTM">
    <text>Cleavage of the C-terminus gives rise to a shorter 40 kDa form.</text>
</comment>
<comment type="disruption phenotype">
    <text evidence="6">No tail is synthesized.</text>
</comment>
<name>BP44_BPMU</name>
<feature type="chain" id="PRO_0000077692" description="Baseplate hub protein gp44">
    <location>
        <begin position="1"/>
        <end position="379"/>
    </location>
</feature>
<feature type="DNA-binding region" description="H-T-H motif" evidence="1">
    <location>
        <begin position="209"/>
        <end position="228"/>
    </location>
</feature>
<feature type="region of interest" description="Disordered" evidence="2">
    <location>
        <begin position="344"/>
        <end position="379"/>
    </location>
</feature>
<feature type="compositionally biased region" description="Basic and acidic residues" evidence="2">
    <location>
        <begin position="344"/>
        <end position="353"/>
    </location>
</feature>
<feature type="compositionally biased region" description="Basic and acidic residues" evidence="2">
    <location>
        <begin position="365"/>
        <end position="379"/>
    </location>
</feature>
<feature type="strand" evidence="10">
    <location>
        <begin position="5"/>
        <end position="9"/>
    </location>
</feature>
<feature type="strand" evidence="10">
    <location>
        <begin position="12"/>
        <end position="15"/>
    </location>
</feature>
<feature type="strand" evidence="10">
    <location>
        <begin position="18"/>
        <end position="25"/>
    </location>
</feature>
<feature type="strand" evidence="10">
    <location>
        <begin position="32"/>
        <end position="39"/>
    </location>
</feature>
<feature type="helix" evidence="10">
    <location>
        <begin position="46"/>
        <end position="48"/>
    </location>
</feature>
<feature type="strand" evidence="10">
    <location>
        <begin position="53"/>
        <end position="58"/>
    </location>
</feature>
<feature type="strand" evidence="10">
    <location>
        <begin position="61"/>
        <end position="75"/>
    </location>
</feature>
<feature type="strand" evidence="10">
    <location>
        <begin position="80"/>
        <end position="88"/>
    </location>
</feature>
<feature type="helix" evidence="10">
    <location>
        <begin position="91"/>
        <end position="95"/>
    </location>
</feature>
<feature type="strand" evidence="10">
    <location>
        <begin position="101"/>
        <end position="108"/>
    </location>
</feature>
<feature type="helix" evidence="10">
    <location>
        <begin position="110"/>
        <end position="118"/>
    </location>
</feature>
<feature type="helix" evidence="10">
    <location>
        <begin position="119"/>
        <end position="121"/>
    </location>
</feature>
<feature type="strand" evidence="10">
    <location>
        <begin position="125"/>
        <end position="127"/>
    </location>
</feature>
<feature type="helix" evidence="10">
    <location>
        <begin position="132"/>
        <end position="135"/>
    </location>
</feature>
<feature type="strand" evidence="10">
    <location>
        <begin position="138"/>
        <end position="142"/>
    </location>
</feature>
<feature type="helix" evidence="10">
    <location>
        <begin position="149"/>
        <end position="158"/>
    </location>
</feature>
<feature type="turn" evidence="10">
    <location>
        <begin position="159"/>
        <end position="161"/>
    </location>
</feature>
<feature type="strand" evidence="10">
    <location>
        <begin position="163"/>
        <end position="166"/>
    </location>
</feature>
<feature type="helix" evidence="10">
    <location>
        <begin position="168"/>
        <end position="170"/>
    </location>
</feature>
<feature type="strand" evidence="10">
    <location>
        <begin position="172"/>
        <end position="175"/>
    </location>
</feature>
<feature type="strand" evidence="10">
    <location>
        <begin position="180"/>
        <end position="187"/>
    </location>
</feature>
<feature type="turn" evidence="10">
    <location>
        <begin position="188"/>
        <end position="190"/>
    </location>
</feature>
<feature type="strand" evidence="10">
    <location>
        <begin position="191"/>
        <end position="198"/>
    </location>
</feature>
<feature type="strand" evidence="10">
    <location>
        <begin position="205"/>
        <end position="209"/>
    </location>
</feature>
<feature type="strand" evidence="10">
    <location>
        <begin position="233"/>
        <end position="236"/>
    </location>
</feature>
<feature type="strand" evidence="10">
    <location>
        <begin position="245"/>
        <end position="248"/>
    </location>
</feature>
<feature type="helix" evidence="10">
    <location>
        <begin position="256"/>
        <end position="274"/>
    </location>
</feature>
<feature type="strand" evidence="10">
    <location>
        <begin position="275"/>
        <end position="285"/>
    </location>
</feature>
<feature type="strand" evidence="10">
    <location>
        <begin position="297"/>
        <end position="302"/>
    </location>
</feature>
<feature type="helix" evidence="10">
    <location>
        <begin position="303"/>
        <end position="305"/>
    </location>
</feature>
<feature type="strand" evidence="10">
    <location>
        <begin position="312"/>
        <end position="322"/>
    </location>
</feature>
<feature type="turn" evidence="10">
    <location>
        <begin position="323"/>
        <end position="325"/>
    </location>
</feature>
<feature type="strand" evidence="10">
    <location>
        <begin position="326"/>
        <end position="335"/>
    </location>
</feature>
<feature type="helix" evidence="10">
    <location>
        <begin position="336"/>
        <end position="339"/>
    </location>
</feature>
<keyword id="KW-0002">3D-structure</keyword>
<keyword id="KW-1035">Host cytoplasm</keyword>
<keyword id="KW-0426">Late protein</keyword>
<keyword id="KW-1185">Reference proteome</keyword>
<keyword id="KW-1226">Viral baseplate protein</keyword>
<keyword id="KW-1242">Viral contractile tail ejection system</keyword>
<keyword id="KW-1171">Viral genome ejection through host cell envelope</keyword>
<keyword id="KW-1162">Viral penetration into host cytoplasm</keyword>
<keyword id="KW-1188">Viral release from host cell</keyword>
<keyword id="KW-1245">Viral tail assembly</keyword>
<keyword id="KW-1227">Viral tail protein</keyword>
<keyword id="KW-0946">Virion</keyword>
<keyword id="KW-1160">Virus entry into host cell</keyword>